<protein>
    <recommendedName>
        <fullName>Structural maintenance of chromosomes protein 3</fullName>
    </recommendedName>
    <alternativeName>
        <fullName>DA-box protein SMC3</fullName>
    </alternativeName>
</protein>
<dbReference type="EMBL" id="Y14278">
    <property type="protein sequence ID" value="CAA74655.1"/>
    <property type="molecule type" value="Genomic_DNA"/>
</dbReference>
<dbReference type="EMBL" id="Z49349">
    <property type="protein sequence ID" value="CAA89366.1"/>
    <property type="molecule type" value="Genomic_DNA"/>
</dbReference>
<dbReference type="EMBL" id="X88851">
    <property type="protein sequence ID" value="CAA61313.1"/>
    <property type="molecule type" value="Genomic_DNA"/>
</dbReference>
<dbReference type="EMBL" id="BK006943">
    <property type="protein sequence ID" value="DAA08725.1"/>
    <property type="molecule type" value="Genomic_DNA"/>
</dbReference>
<dbReference type="PIR" id="S56850">
    <property type="entry name" value="S56850"/>
</dbReference>
<dbReference type="RefSeq" id="NP_012461.1">
    <property type="nucleotide sequence ID" value="NM_001181507.1"/>
</dbReference>
<dbReference type="PDB" id="4UX3">
    <property type="method" value="X-ray"/>
    <property type="resolution" value="3.30 A"/>
    <property type="chains" value="A=2-261, A=970-1230"/>
</dbReference>
<dbReference type="PDB" id="6QPW">
    <property type="method" value="EM"/>
    <property type="resolution" value="3.30 A"/>
    <property type="chains" value="C=2-261, C=970-1230"/>
</dbReference>
<dbReference type="PDB" id="6ZZ6">
    <property type="method" value="EM"/>
    <property type="resolution" value="3.40 A"/>
    <property type="chains" value="B=2-1222"/>
</dbReference>
<dbReference type="PDB" id="7OGT">
    <property type="method" value="EM"/>
    <property type="resolution" value="5.50 A"/>
    <property type="chains" value="B=1-1230"/>
</dbReference>
<dbReference type="PDBsum" id="4UX3"/>
<dbReference type="PDBsum" id="6QPW"/>
<dbReference type="PDBsum" id="6ZZ6"/>
<dbReference type="PDBsum" id="7OGT"/>
<dbReference type="EMDB" id="EMD-11585"/>
<dbReference type="EMDB" id="EMD-12887"/>
<dbReference type="EMDB" id="EMD-4616"/>
<dbReference type="SMR" id="P47037"/>
<dbReference type="BioGRID" id="33681">
    <property type="interactions" value="526"/>
</dbReference>
<dbReference type="ComplexPortal" id="CPX-1408">
    <property type="entry name" value="Nuclear meiotic cohesin complex"/>
</dbReference>
<dbReference type="ComplexPortal" id="CPX-1867">
    <property type="entry name" value="Nuclear mitotic cohesin complex"/>
</dbReference>
<dbReference type="DIP" id="DIP-2991N"/>
<dbReference type="FunCoup" id="P47037">
    <property type="interactions" value="1573"/>
</dbReference>
<dbReference type="IntAct" id="P47037">
    <property type="interactions" value="59"/>
</dbReference>
<dbReference type="MINT" id="P47037"/>
<dbReference type="STRING" id="4932.YJL074C"/>
<dbReference type="iPTMnet" id="P47037"/>
<dbReference type="PaxDb" id="4932-YJL074C"/>
<dbReference type="PeptideAtlas" id="P47037"/>
<dbReference type="EnsemblFungi" id="YJL074C_mRNA">
    <property type="protein sequence ID" value="YJL074C"/>
    <property type="gene ID" value="YJL074C"/>
</dbReference>
<dbReference type="GeneID" id="853371"/>
<dbReference type="KEGG" id="sce:YJL074C"/>
<dbReference type="AGR" id="SGD:S000003610"/>
<dbReference type="SGD" id="S000003610">
    <property type="gene designation" value="SMC3"/>
</dbReference>
<dbReference type="VEuPathDB" id="FungiDB:YJL074C"/>
<dbReference type="eggNOG" id="KOG0964">
    <property type="taxonomic scope" value="Eukaryota"/>
</dbReference>
<dbReference type="GeneTree" id="ENSGT00940000169262"/>
<dbReference type="HOGENOM" id="CLU_001042_5_0_1"/>
<dbReference type="InParanoid" id="P47037"/>
<dbReference type="OMA" id="GQKTVCA"/>
<dbReference type="OrthoDB" id="431497at2759"/>
<dbReference type="BioCyc" id="YEAST:G3O-31532-MONOMER"/>
<dbReference type="Reactome" id="R-SCE-2468052">
    <property type="pathway name" value="Establishment of Sister Chromatid Cohesion"/>
</dbReference>
<dbReference type="Reactome" id="R-SCE-2500257">
    <property type="pathway name" value="Resolution of Sister Chromatid Cohesion"/>
</dbReference>
<dbReference type="Reactome" id="R-SCE-3108214">
    <property type="pathway name" value="SUMOylation of DNA damage response and repair proteins"/>
</dbReference>
<dbReference type="BioGRID-ORCS" id="853371">
    <property type="hits" value="6 hits in 10 CRISPR screens"/>
</dbReference>
<dbReference type="CD-CODE" id="5F622AE2">
    <property type="entry name" value="Synthetic Condensate 000372"/>
</dbReference>
<dbReference type="EvolutionaryTrace" id="P47037"/>
<dbReference type="PRO" id="PR:P47037"/>
<dbReference type="Proteomes" id="UP000002311">
    <property type="component" value="Chromosome X"/>
</dbReference>
<dbReference type="RNAct" id="P47037">
    <property type="molecule type" value="protein"/>
</dbReference>
<dbReference type="GO" id="GO:0030893">
    <property type="term" value="C:meiotic cohesin complex"/>
    <property type="evidence" value="ECO:0000303"/>
    <property type="project" value="ComplexPortal"/>
</dbReference>
<dbReference type="GO" id="GO:0030892">
    <property type="term" value="C:mitotic cohesin complex"/>
    <property type="evidence" value="ECO:0000314"/>
    <property type="project" value="SGD"/>
</dbReference>
<dbReference type="GO" id="GO:0005634">
    <property type="term" value="C:nucleus"/>
    <property type="evidence" value="ECO:0000314"/>
    <property type="project" value="SGD"/>
</dbReference>
<dbReference type="GO" id="GO:0005524">
    <property type="term" value="F:ATP binding"/>
    <property type="evidence" value="ECO:0007669"/>
    <property type="project" value="UniProtKB-KW"/>
</dbReference>
<dbReference type="GO" id="GO:0016887">
    <property type="term" value="F:ATP hydrolysis activity"/>
    <property type="evidence" value="ECO:0007669"/>
    <property type="project" value="InterPro"/>
</dbReference>
<dbReference type="GO" id="GO:0003690">
    <property type="term" value="F:double-stranded DNA binding"/>
    <property type="evidence" value="ECO:0000318"/>
    <property type="project" value="GO_Central"/>
</dbReference>
<dbReference type="GO" id="GO:0042802">
    <property type="term" value="F:identical protein binding"/>
    <property type="evidence" value="ECO:0000353"/>
    <property type="project" value="IntAct"/>
</dbReference>
<dbReference type="GO" id="GO:0019901">
    <property type="term" value="F:protein kinase binding"/>
    <property type="evidence" value="ECO:0000353"/>
    <property type="project" value="SGD"/>
</dbReference>
<dbReference type="GO" id="GO:0051301">
    <property type="term" value="P:cell division"/>
    <property type="evidence" value="ECO:0007669"/>
    <property type="project" value="UniProtKB-KW"/>
</dbReference>
<dbReference type="GO" id="GO:0034089">
    <property type="term" value="P:establishment of meiotic sister chromatid cohesion"/>
    <property type="evidence" value="ECO:0000303"/>
    <property type="project" value="ComplexPortal"/>
</dbReference>
<dbReference type="GO" id="GO:0034087">
    <property type="term" value="P:establishment of mitotic sister chromatid cohesion"/>
    <property type="evidence" value="ECO:0000303"/>
    <property type="project" value="ComplexPortal"/>
</dbReference>
<dbReference type="GO" id="GO:0000086">
    <property type="term" value="P:G2/M transition of mitotic cell cycle"/>
    <property type="evidence" value="ECO:0000353"/>
    <property type="project" value="SGD"/>
</dbReference>
<dbReference type="GO" id="GO:0051177">
    <property type="term" value="P:meiotic sister chromatid cohesion"/>
    <property type="evidence" value="ECO:0000315"/>
    <property type="project" value="SGD"/>
</dbReference>
<dbReference type="GO" id="GO:0007064">
    <property type="term" value="P:mitotic sister chromatid cohesion"/>
    <property type="evidence" value="ECO:0000316"/>
    <property type="project" value="SGD"/>
</dbReference>
<dbReference type="GO" id="GO:0007131">
    <property type="term" value="P:reciprocal meiotic recombination"/>
    <property type="evidence" value="ECO:0000315"/>
    <property type="project" value="SGD"/>
</dbReference>
<dbReference type="GO" id="GO:1990414">
    <property type="term" value="P:replication-born double-strand break repair via sister chromatid exchange"/>
    <property type="evidence" value="ECO:0000315"/>
    <property type="project" value="SGD"/>
</dbReference>
<dbReference type="GO" id="GO:0007130">
    <property type="term" value="P:synaptonemal complex assembly"/>
    <property type="evidence" value="ECO:0000315"/>
    <property type="project" value="SGD"/>
</dbReference>
<dbReference type="CDD" id="cd03272">
    <property type="entry name" value="ABC_SMC3_euk"/>
    <property type="match status" value="1"/>
</dbReference>
<dbReference type="FunFam" id="3.40.50.300:FF:000370">
    <property type="entry name" value="Structural maintenance of chromosomes 3"/>
    <property type="match status" value="1"/>
</dbReference>
<dbReference type="FunFam" id="3.40.50.300:FF:000424">
    <property type="entry name" value="Structural maintenance of chromosomes 3"/>
    <property type="match status" value="1"/>
</dbReference>
<dbReference type="FunFam" id="1.20.1060.20:FF:000015">
    <property type="entry name" value="Structural maintenance of chromosomes protein"/>
    <property type="match status" value="1"/>
</dbReference>
<dbReference type="Gene3D" id="1.20.1060.20">
    <property type="match status" value="1"/>
</dbReference>
<dbReference type="Gene3D" id="3.30.70.1620">
    <property type="match status" value="1"/>
</dbReference>
<dbReference type="Gene3D" id="3.40.50.300">
    <property type="entry name" value="P-loop containing nucleotide triphosphate hydrolases"/>
    <property type="match status" value="2"/>
</dbReference>
<dbReference type="InterPro" id="IPR027417">
    <property type="entry name" value="P-loop_NTPase"/>
</dbReference>
<dbReference type="InterPro" id="IPR003395">
    <property type="entry name" value="RecF/RecN/SMC_N"/>
</dbReference>
<dbReference type="InterPro" id="IPR024704">
    <property type="entry name" value="SMC"/>
</dbReference>
<dbReference type="InterPro" id="IPR041741">
    <property type="entry name" value="SMC3_ABC_euk"/>
</dbReference>
<dbReference type="InterPro" id="IPR010935">
    <property type="entry name" value="SMC_hinge"/>
</dbReference>
<dbReference type="InterPro" id="IPR036277">
    <property type="entry name" value="SMC_hinge_sf"/>
</dbReference>
<dbReference type="PANTHER" id="PTHR43977">
    <property type="entry name" value="STRUCTURAL MAINTENANCE OF CHROMOSOMES PROTEIN 3"/>
    <property type="match status" value="1"/>
</dbReference>
<dbReference type="Pfam" id="PF06470">
    <property type="entry name" value="SMC_hinge"/>
    <property type="match status" value="1"/>
</dbReference>
<dbReference type="Pfam" id="PF02463">
    <property type="entry name" value="SMC_N"/>
    <property type="match status" value="1"/>
</dbReference>
<dbReference type="PIRSF" id="PIRSF005719">
    <property type="entry name" value="SMC"/>
    <property type="match status" value="1"/>
</dbReference>
<dbReference type="SMART" id="SM00968">
    <property type="entry name" value="SMC_hinge"/>
    <property type="match status" value="1"/>
</dbReference>
<dbReference type="SUPFAM" id="SSF52540">
    <property type="entry name" value="P-loop containing nucleoside triphosphate hydrolases"/>
    <property type="match status" value="1"/>
</dbReference>
<dbReference type="SUPFAM" id="SSF75553">
    <property type="entry name" value="Smc hinge domain"/>
    <property type="match status" value="1"/>
</dbReference>
<organism>
    <name type="scientific">Saccharomyces cerevisiae (strain ATCC 204508 / S288c)</name>
    <name type="common">Baker's yeast</name>
    <dbReference type="NCBI Taxonomy" id="559292"/>
    <lineage>
        <taxon>Eukaryota</taxon>
        <taxon>Fungi</taxon>
        <taxon>Dikarya</taxon>
        <taxon>Ascomycota</taxon>
        <taxon>Saccharomycotina</taxon>
        <taxon>Saccharomycetes</taxon>
        <taxon>Saccharomycetales</taxon>
        <taxon>Saccharomycetaceae</taxon>
        <taxon>Saccharomyces</taxon>
    </lineage>
</organism>
<comment type="function">
    <text>Involved in chromosome cohesion during cell cycle and in DNA repair. Central component of cohesin complex. The cohesin complex is required for the cohesion of sister chromatids after DNA replication. The cohesin complex apparently forms a large proteinaceous ring within which sister chromatids can be trapped. At anaphase, the complex is cleaved and dissociates from chromatin, allowing sister chromatids to segregate.</text>
</comment>
<comment type="subunit">
    <text evidence="4 7">Cohesin complexes are composed of the SMC1 and SMC3 heterodimer attached via their SMC hinge domain, MCD1/SCC1 which link them, and IRR1/SCC3, which interacts with MCD1. The cohesin complex also interacts with SCC2, which is required for its association with chromosomes.</text>
</comment>
<comment type="interaction">
    <interactant intactId="EBI-17423">
        <id>P47037</id>
    </interactant>
    <interactant intactId="EBI-16655">
        <id>Q12158</id>
        <label>MCD1</label>
    </interactant>
    <organismsDiffer>false</organismsDiffer>
    <experiments>14</experiments>
</comment>
<comment type="interaction">
    <interactant intactId="EBI-17423">
        <id>P47037</id>
    </interactant>
    <interactant intactId="EBI-2082336">
        <id>Q99359</id>
        <label>RAD61</label>
    </interactant>
    <organismsDiffer>false</organismsDiffer>
    <experiments>9</experiments>
</comment>
<comment type="interaction">
    <interactant intactId="EBI-17423">
        <id>P47037</id>
    </interactant>
    <interactant intactId="EBI-17402">
        <id>P32908</id>
        <label>SMC1</label>
    </interactant>
    <organismsDiffer>false</organismsDiffer>
    <experiments>20</experiments>
</comment>
<comment type="interaction">
    <interactant intactId="EBI-17423">
        <id>P47037</id>
    </interactant>
    <interactant intactId="EBI-17423">
        <id>P47037</id>
        <label>SMC3</label>
    </interactant>
    <organismsDiffer>false</organismsDiffer>
    <experiments>4</experiments>
</comment>
<comment type="subcellular location">
    <subcellularLocation>
        <location>Nucleus</location>
    </subcellularLocation>
    <subcellularLocation>
        <location>Chromosome</location>
    </subcellularLocation>
    <text>Associates with chromatin. Before prophase it is scattered along chromosome arms. At anaphase, the MCD1 subunit of the cohesin complex is cleaved, leading to the dissociation of the complex from chromosomes, allowing chromosome separation.</text>
</comment>
<comment type="domain">
    <text evidence="1">The flexible SMC hinge domain, which separates the large intramolecular coiled coil regions, allows the heterotypic interaction with the corresponding domain of SMC1, forming a V-shaped heterodimer. The two heads of the heterodimer are then connected by different ends of the cleavable MCD1 protein, forming a ring structure (By similarity).</text>
</comment>
<comment type="PTM">
    <text evidence="6">Acetylation at Lys-112 and Lys-113 by ECO1 is important for genome stability and S phase sister chromatid cohesion.</text>
</comment>
<comment type="miscellaneous">
    <text evidence="5">Present with 2660 molecules/cell in log phase SD medium.</text>
</comment>
<comment type="similarity">
    <text evidence="8">Belongs to the SMC family. SMC3 subfamily.</text>
</comment>
<feature type="chain" id="PRO_0000119015" description="Structural maintenance of chromosomes protein 3">
    <location>
        <begin position="1"/>
        <end position="1230"/>
    </location>
</feature>
<feature type="domain" description="SMC hinge">
    <location>
        <begin position="535"/>
        <end position="651"/>
    </location>
</feature>
<feature type="region of interest" description="Disordered" evidence="3">
    <location>
        <begin position="1078"/>
        <end position="1097"/>
    </location>
</feature>
<feature type="coiled-coil region" evidence="2">
    <location>
        <begin position="172"/>
        <end position="482"/>
    </location>
</feature>
<feature type="coiled-coil region" evidence="2">
    <location>
        <begin position="685"/>
        <end position="1041"/>
    </location>
</feature>
<feature type="binding site" evidence="2">
    <location>
        <begin position="32"/>
        <end position="39"/>
    </location>
    <ligand>
        <name>ATP</name>
        <dbReference type="ChEBI" id="CHEBI:30616"/>
    </ligand>
</feature>
<feature type="modified residue" description="N6-acetyllysine" evidence="6">
    <location>
        <position position="112"/>
    </location>
</feature>
<feature type="modified residue" description="N6-acetyllysine" evidence="6">
    <location>
        <position position="113"/>
    </location>
</feature>
<feature type="strand" evidence="9">
    <location>
        <begin position="6"/>
        <end position="11"/>
    </location>
</feature>
<feature type="strand" evidence="9">
    <location>
        <begin position="14"/>
        <end position="17"/>
    </location>
</feature>
<feature type="strand" evidence="10">
    <location>
        <begin position="18"/>
        <end position="20"/>
    </location>
</feature>
<feature type="strand" evidence="9">
    <location>
        <begin position="25"/>
        <end position="33"/>
    </location>
</feature>
<feature type="helix" evidence="9">
    <location>
        <begin position="38"/>
        <end position="49"/>
    </location>
</feature>
<feature type="strand" evidence="9">
    <location>
        <begin position="53"/>
        <end position="55"/>
    </location>
</feature>
<feature type="helix" evidence="9">
    <location>
        <begin position="58"/>
        <end position="64"/>
    </location>
</feature>
<feature type="strand" evidence="9">
    <location>
        <begin position="68"/>
        <end position="72"/>
    </location>
</feature>
<feature type="strand" evidence="9">
    <location>
        <begin position="77"/>
        <end position="80"/>
    </location>
</feature>
<feature type="strand" evidence="10">
    <location>
        <begin position="102"/>
        <end position="104"/>
    </location>
</feature>
<feature type="turn" evidence="9">
    <location>
        <begin position="111"/>
        <end position="113"/>
    </location>
</feature>
<feature type="strand" evidence="11">
    <location>
        <begin position="114"/>
        <end position="117"/>
    </location>
</feature>
<feature type="turn" evidence="9">
    <location>
        <begin position="118"/>
        <end position="121"/>
    </location>
</feature>
<feature type="helix" evidence="9">
    <location>
        <begin position="125"/>
        <end position="133"/>
    </location>
</feature>
<feature type="turn" evidence="10">
    <location>
        <begin position="134"/>
        <end position="136"/>
    </location>
</feature>
<feature type="strand" evidence="9">
    <location>
        <begin position="142"/>
        <end position="146"/>
    </location>
</feature>
<feature type="helix" evidence="9">
    <location>
        <begin position="152"/>
        <end position="154"/>
    </location>
</feature>
<feature type="helix" evidence="9">
    <location>
        <begin position="159"/>
        <end position="167"/>
    </location>
</feature>
<feature type="helix" evidence="9">
    <location>
        <begin position="172"/>
        <end position="237"/>
    </location>
</feature>
<feature type="helix" evidence="9">
    <location>
        <begin position="239"/>
        <end position="244"/>
    </location>
</feature>
<feature type="helix" evidence="11">
    <location>
        <begin position="265"/>
        <end position="288"/>
    </location>
</feature>
<feature type="strand" evidence="11">
    <location>
        <begin position="306"/>
        <end position="308"/>
    </location>
</feature>
<feature type="strand" evidence="11">
    <location>
        <begin position="312"/>
        <end position="315"/>
    </location>
</feature>
<feature type="strand" evidence="11">
    <location>
        <begin position="320"/>
        <end position="323"/>
    </location>
</feature>
<feature type="helix" evidence="11">
    <location>
        <begin position="333"/>
        <end position="345"/>
    </location>
</feature>
<feature type="helix" evidence="9">
    <location>
        <begin position="976"/>
        <end position="980"/>
    </location>
</feature>
<feature type="helix" evidence="9">
    <location>
        <begin position="982"/>
        <end position="988"/>
    </location>
</feature>
<feature type="helix" evidence="9">
    <location>
        <begin position="998"/>
        <end position="1059"/>
    </location>
</feature>
<feature type="strand" evidence="9">
    <location>
        <begin position="1065"/>
        <end position="1069"/>
    </location>
</feature>
<feature type="strand" evidence="9">
    <location>
        <begin position="1109"/>
        <end position="1113"/>
    </location>
</feature>
<feature type="strand" evidence="10">
    <location>
        <begin position="1115"/>
        <end position="1117"/>
    </location>
</feature>
<feature type="strand" evidence="9">
    <location>
        <begin position="1121"/>
        <end position="1123"/>
    </location>
</feature>
<feature type="helix" evidence="9">
    <location>
        <begin position="1128"/>
        <end position="1143"/>
    </location>
</feature>
<feature type="strand" evidence="9">
    <location>
        <begin position="1149"/>
        <end position="1153"/>
    </location>
</feature>
<feature type="turn" evidence="9">
    <location>
        <begin position="1154"/>
        <end position="1159"/>
    </location>
</feature>
<feature type="helix" evidence="9">
    <location>
        <begin position="1162"/>
        <end position="1176"/>
    </location>
</feature>
<feature type="strand" evidence="9">
    <location>
        <begin position="1179"/>
        <end position="1184"/>
    </location>
</feature>
<feature type="helix" evidence="9">
    <location>
        <begin position="1188"/>
        <end position="1190"/>
    </location>
</feature>
<feature type="turn" evidence="9">
    <location>
        <begin position="1191"/>
        <end position="1193"/>
    </location>
</feature>
<feature type="strand" evidence="9">
    <location>
        <begin position="1198"/>
        <end position="1203"/>
    </location>
</feature>
<feature type="strand" evidence="9">
    <location>
        <begin position="1206"/>
        <end position="1210"/>
    </location>
</feature>
<feature type="helix" evidence="9">
    <location>
        <begin position="1214"/>
        <end position="1221"/>
    </location>
</feature>
<accession>P47037</accession>
<accession>D6VWA9</accession>
<proteinExistence type="evidence at protein level"/>
<name>SMC3_YEAST</name>
<gene>
    <name type="primary">SMC3</name>
    <name type="ordered locus">YJL074C</name>
    <name type="ORF">J1049</name>
</gene>
<evidence type="ECO:0000250" key="1"/>
<evidence type="ECO:0000255" key="2"/>
<evidence type="ECO:0000256" key="3">
    <source>
        <dbReference type="SAM" id="MobiDB-lite"/>
    </source>
</evidence>
<evidence type="ECO:0000269" key="4">
    <source>
    </source>
</evidence>
<evidence type="ECO:0000269" key="5">
    <source>
    </source>
</evidence>
<evidence type="ECO:0000269" key="6">
    <source>
    </source>
</evidence>
<evidence type="ECO:0000269" key="7">
    <source>
    </source>
</evidence>
<evidence type="ECO:0000305" key="8"/>
<evidence type="ECO:0007829" key="9">
    <source>
        <dbReference type="PDB" id="4UX3"/>
    </source>
</evidence>
<evidence type="ECO:0007829" key="10">
    <source>
        <dbReference type="PDB" id="6QPW"/>
    </source>
</evidence>
<evidence type="ECO:0007829" key="11">
    <source>
        <dbReference type="PDB" id="6ZZ6"/>
    </source>
</evidence>
<reference key="1">
    <citation type="journal article" date="1997" name="Cell">
        <title>Cohesins: chromosomal proteins that prevent premature separation of sister chromatids.</title>
        <authorList>
            <person name="Michaelis C."/>
            <person name="Ciosk R."/>
            <person name="Nasmyth K."/>
        </authorList>
    </citation>
    <scope>NUCLEOTIDE SEQUENCE [GENOMIC DNA]</scope>
    <source>
        <strain>ATCC 200060 / W303</strain>
    </source>
</reference>
<reference key="2">
    <citation type="journal article" date="1996" name="EMBO J.">
        <title>Complete nucleotide sequence of Saccharomyces cerevisiae chromosome X.</title>
        <authorList>
            <person name="Galibert F."/>
            <person name="Alexandraki D."/>
            <person name="Baur A."/>
            <person name="Boles E."/>
            <person name="Chalwatzis N."/>
            <person name="Chuat J.-C."/>
            <person name="Coster F."/>
            <person name="Cziepluch C."/>
            <person name="de Haan M."/>
            <person name="Domdey H."/>
            <person name="Durand P."/>
            <person name="Entian K.-D."/>
            <person name="Gatius M."/>
            <person name="Goffeau A."/>
            <person name="Grivell L.A."/>
            <person name="Hennemann A."/>
            <person name="Herbert C.J."/>
            <person name="Heumann K."/>
            <person name="Hilger F."/>
            <person name="Hollenberg C.P."/>
            <person name="Huang M.-E."/>
            <person name="Jacq C."/>
            <person name="Jauniaux J.-C."/>
            <person name="Katsoulou C."/>
            <person name="Kirchrath L."/>
            <person name="Kleine K."/>
            <person name="Kordes E."/>
            <person name="Koetter P."/>
            <person name="Liebl S."/>
            <person name="Louis E.J."/>
            <person name="Manus V."/>
            <person name="Mewes H.-W."/>
            <person name="Miosga T."/>
            <person name="Obermaier B."/>
            <person name="Perea J."/>
            <person name="Pohl T.M."/>
            <person name="Portetelle D."/>
            <person name="Pujol A."/>
            <person name="Purnelle B."/>
            <person name="Ramezani Rad M."/>
            <person name="Rasmussen S.W."/>
            <person name="Rose M."/>
            <person name="Rossau R."/>
            <person name="Schaaff-Gerstenschlaeger I."/>
            <person name="Smits P.H.M."/>
            <person name="Scarcez T."/>
            <person name="Soriano N."/>
            <person name="To Van D."/>
            <person name="Tzermia M."/>
            <person name="Van Broekhoven A."/>
            <person name="Vandenbol M."/>
            <person name="Wedler H."/>
            <person name="von Wettstein D."/>
            <person name="Wambutt R."/>
            <person name="Zagulski M."/>
            <person name="Zollner A."/>
            <person name="Karpfinger-Hartl L."/>
        </authorList>
    </citation>
    <scope>NUCLEOTIDE SEQUENCE [LARGE SCALE GENOMIC DNA]</scope>
    <source>
        <strain>ATCC 204508 / S288c</strain>
    </source>
</reference>
<reference key="3">
    <citation type="journal article" date="2014" name="G3 (Bethesda)">
        <title>The reference genome sequence of Saccharomyces cerevisiae: Then and now.</title>
        <authorList>
            <person name="Engel S.R."/>
            <person name="Dietrich F.S."/>
            <person name="Fisk D.G."/>
            <person name="Binkley G."/>
            <person name="Balakrishnan R."/>
            <person name="Costanzo M.C."/>
            <person name="Dwight S.S."/>
            <person name="Hitz B.C."/>
            <person name="Karra K."/>
            <person name="Nash R.S."/>
            <person name="Weng S."/>
            <person name="Wong E.D."/>
            <person name="Lloyd P."/>
            <person name="Skrzypek M.S."/>
            <person name="Miyasato S.R."/>
            <person name="Simison M."/>
            <person name="Cherry J.M."/>
        </authorList>
    </citation>
    <scope>GENOME REANNOTATION</scope>
    <source>
        <strain>ATCC 204508 / S288c</strain>
    </source>
</reference>
<reference key="4">
    <citation type="submission" date="1995-06" db="EMBL/GenBank/DDBJ databases">
        <authorList>
            <person name="Sor F.J."/>
        </authorList>
    </citation>
    <scope>NUCLEOTIDE SEQUENCE [GENOMIC DNA]</scope>
    <source>
        <strain>S288c / FY1678</strain>
    </source>
</reference>
<reference key="5">
    <citation type="journal article" date="1999" name="Genes Dev.">
        <title>Yeast cohesin complex requires a conserved protein, Eco1p(Ctf7), to establish cohesion between sister chromatids during DNA replication.</title>
        <authorList>
            <person name="Toth A."/>
            <person name="Ciosk R."/>
            <person name="Uhlmann F."/>
            <person name="Galova M."/>
            <person name="Schleiffer A."/>
            <person name="Nasmyth K."/>
        </authorList>
    </citation>
    <scope>IDENTIFICATION IN A COHESIN COMPLEX WITH SMC1; IRR1 AND MCD1</scope>
    <scope>INTERACTION OF THE COHESIN COMPLEX WITH SCC2</scope>
</reference>
<reference key="6">
    <citation type="journal article" date="2002" name="Mol. Cell">
        <title>Molecular architecture of SMC proteins and the yeast cohesin complex.</title>
        <authorList>
            <person name="Haering C.H."/>
            <person name="Loewe J."/>
            <person name="Hochwagen A."/>
            <person name="Nasmyth K."/>
        </authorList>
    </citation>
    <scope>IDENTIFICATION IN A COHESIN COMPLEX WITH SMC3; MCD1 AND IRR1</scope>
    <scope>STRUCTURE</scope>
</reference>
<reference key="7">
    <citation type="journal article" date="2003" name="Nature">
        <title>Global analysis of protein expression in yeast.</title>
        <authorList>
            <person name="Ghaemmaghami S."/>
            <person name="Huh W.-K."/>
            <person name="Bower K."/>
            <person name="Howson R.W."/>
            <person name="Belle A."/>
            <person name="Dephoure N."/>
            <person name="O'Shea E.K."/>
            <person name="Weissman J.S."/>
        </authorList>
    </citation>
    <scope>LEVEL OF PROTEIN EXPRESSION [LARGE SCALE ANALYSIS]</scope>
</reference>
<reference key="8">
    <citation type="journal article" date="2008" name="Mol. Cell">
        <title>Acetylation of Smc3 by Eco1 is required for S phase sister chromatid cohesion in both human and yeast.</title>
        <authorList>
            <person name="Zhang J."/>
            <person name="Shi X."/>
            <person name="Li Y."/>
            <person name="Kim B.J."/>
            <person name="Jia J."/>
            <person name="Huang Z."/>
            <person name="Yang T."/>
            <person name="Fu X."/>
            <person name="Jung S.Y."/>
            <person name="Wang Y."/>
            <person name="Zhang P."/>
            <person name="Kim S.T."/>
            <person name="Pan X."/>
            <person name="Qin J."/>
        </authorList>
    </citation>
    <scope>ACETYLATION AT LYS-112 AND LYS-113</scope>
</reference>
<sequence>MYIKRVIIKGFKTYRNETIIDNFSPHQNVIIGSNGSGKSNFFAAIRFVLSDDYSNLKREERQGLIHQGSGGSVMSASVEIVFHDPDHSMILPSGVLSRGDDEVTIRRTVGLKKDDYQLNDRNVTKGDIVRMLETAGFSMNNPYNIVPQGKIVALTNAKDKERLQLLEDVVGAKSFEVKLKASLKKMEETEQKKIQINKEMGELNSKLSEMEQERKELEKYNELERNRKIYQFTLYDRELNEVINQMERLDGDYNNTVYSSEQYIQELDKREDMIDQVSKKLSSIEASLKIKNATDLQQAKLRESEISQKLTNVNVKIKDVQQQIESNEEQRNLDSATLKEIKSIIEQRKQKLSKILPRYQELTKEEAMYKLQLASLQQKQRDLILKKGEYARFKSKDERDTWIHSEIEELKSSIQNLNELESQLQMDRTSLRKQYSAIDEEIEELIDSINGPDTKGQLEDFDSELIHLKQKLSESLDTRKELWRKEQKLQTVLETLLSDVNQNQRNVNETMSRSLANGIINVKEITEKLKISPESVFGTLGELIKVNDKYKTCAEVIGGNSLFHIVVDTEETATLIMNELYRMKGGRVTFIPLNRLSLDSDVKFPSNTTTQIQFTPLIKKIKYEPRFEKAVKHVFGKTIVVKDLGQGLKLAKKHKLNAITLDGDRADKRGVLTGGYLDQHKRTRLESLKNLNESRSQHKKILEELDFVRNELNDIDTKIDQVNGNIRKVSNDRESVLTNIEVYRTSLNTKKNEKLILEESLNAIILKLEKLNTNRTFAQEKLNTFENDLLQEFDSELSKEEKERLESLTKEISAAHNKLNITSDALEGITTTIDSLNAELESKLIPQENDLESKMSEVGDAFIFGLQDELKELQLEKESVEKQHENAVLELGTVQREIESLIAEETNNKKLLEKANNQQRLLLKKLDNFQKSVEKTMIKKTTLVTRREELQQRIREIGLLPEDALVNDFSDITSDQLLQRLNDMNTEISGLKNVNKRAFENFKKFNERRKDLAERASELDESKDSIQDLIVKLKQQKVNAVDSTFQKVSENFEAVFERLVPRGTAKLIIHRKNDNANDHDESIDVDMDAESNESQNGKDSEIMYTGVSISVSFNSKQNEQLHVEQLSGGQKTVCAIALILAIQMVDPASFYLFDEIDAALDKQYRTAVATLLKELSKNAQFICTTFRTDMLQVADKFFRVKYENKISTVIEVNREEAIGFIRGSNKFAEV</sequence>
<keyword id="KW-0002">3D-structure</keyword>
<keyword id="KW-0007">Acetylation</keyword>
<keyword id="KW-0067">ATP-binding</keyword>
<keyword id="KW-0131">Cell cycle</keyword>
<keyword id="KW-0132">Cell division</keyword>
<keyword id="KW-0158">Chromosome</keyword>
<keyword id="KW-0175">Coiled coil</keyword>
<keyword id="KW-0498">Mitosis</keyword>
<keyword id="KW-0547">Nucleotide-binding</keyword>
<keyword id="KW-0539">Nucleus</keyword>
<keyword id="KW-1185">Reference proteome</keyword>